<comment type="function">
    <text evidence="5 6 8">Catalyzes the hydrolysis of cutin, a polyester that forms the structure of plant cuticle (Ref.1). Shows esterase activity towards p-nitrophenol-linked aliphatic esters (pNP-aliphatic esters) (PubMed:23592055, Ref.1). Capable of degrading the plastic poly(ethylene terephthalate) (PET), the most abundant polyester plastic in the world (PubMed:23592055, Ref.1). Capable of degrading the bioplastic poly(lactic acid) (PLLA) (PubMed:28671263).</text>
</comment>
<comment type="catalytic activity">
    <reaction evidence="5 8">
        <text>a butanoate ester + H2O = an aliphatic alcohol + butanoate + H(+)</text>
        <dbReference type="Rhea" id="RHEA:47348"/>
        <dbReference type="ChEBI" id="CHEBI:2571"/>
        <dbReference type="ChEBI" id="CHEBI:15377"/>
        <dbReference type="ChEBI" id="CHEBI:15378"/>
        <dbReference type="ChEBI" id="CHEBI:17968"/>
        <dbReference type="ChEBI" id="CHEBI:50477"/>
    </reaction>
    <physiologicalReaction direction="left-to-right" evidence="5 8">
        <dbReference type="Rhea" id="RHEA:47349"/>
    </physiologicalReaction>
</comment>
<comment type="catalytic activity">
    <reaction evidence="5 8">
        <text>an acetyl ester + H2O = an aliphatic alcohol + acetate + H(+)</text>
        <dbReference type="Rhea" id="RHEA:12957"/>
        <dbReference type="ChEBI" id="CHEBI:2571"/>
        <dbReference type="ChEBI" id="CHEBI:15377"/>
        <dbReference type="ChEBI" id="CHEBI:15378"/>
        <dbReference type="ChEBI" id="CHEBI:30089"/>
        <dbReference type="ChEBI" id="CHEBI:47622"/>
    </reaction>
    <physiologicalReaction direction="left-to-right" evidence="5 8">
        <dbReference type="Rhea" id="RHEA:12958"/>
    </physiologicalReaction>
</comment>
<comment type="catalytic activity">
    <reaction evidence="5 8 11">
        <text>(ethylene terephthalate)(n) + H2O = (ethylene terephthalate)(n-1) + 4-[(2-hydroxyethoxy)carbonyl]benzoate + H(+)</text>
        <dbReference type="Rhea" id="RHEA:49528"/>
        <dbReference type="Rhea" id="RHEA-COMP:12420"/>
        <dbReference type="Rhea" id="RHEA-COMP:12421"/>
        <dbReference type="ChEBI" id="CHEBI:15377"/>
        <dbReference type="ChEBI" id="CHEBI:15378"/>
        <dbReference type="ChEBI" id="CHEBI:131701"/>
        <dbReference type="ChEBI" id="CHEBI:131704"/>
        <dbReference type="EC" id="3.1.1.101"/>
    </reaction>
    <physiologicalReaction direction="left-to-right" evidence="8">
        <dbReference type="Rhea" id="RHEA:49529"/>
    </physiologicalReaction>
</comment>
<comment type="catalytic activity">
    <reaction evidence="11">
        <text>cutin + H2O = cutin monomers.</text>
        <dbReference type="EC" id="3.1.1.74"/>
    </reaction>
</comment>
<comment type="biophysicochemical properties">
    <kinetics>
        <KM evidence="8">200 uM for pNP-acetate (at 25 degrees Celsius and pH 7)</KM>
        <KM evidence="5">1.9 mM for pNP-acetate (at 25 degrees Celsius and pH 7)</KM>
        <KM evidence="8">2133 uM for pNP-butanoate (at 25 degrees Celsius and pH 7)</KM>
        <KM evidence="5">3.4 mM for pNP-butanoate (at 25 degrees Celsius and pH 7)</KM>
        <text evidence="5 8">kcat is 2.4 sec(-1) with pNP-acetate as substrate (at 25 degrees Celsius and pH 7) (Ref.1). kcat is 17 sec(-1) with pNP-acetate as substrate (at 25 degrees Celsius and pH 7) (PubMed:23592055). kcat is 5.3 sec(-1) with pNP-butanoate as substrate (at 25 degrees Celsius and pH 7) (Ref.1). kcat is 16 sec(-1) with pNP-butanoate as substrate (at 25 degrees Celsius and pH 7) (Ref.1).</text>
    </kinetics>
</comment>
<comment type="subcellular location">
    <subcellularLocation>
        <location evidence="2">Secreted</location>
    </subcellularLocation>
    <subcellularLocation>
        <location evidence="2">Periplasm</location>
    </subcellularLocation>
</comment>
<comment type="biotechnology">
    <text evidence="5 6 7 8">Shows promising applications in ethyl alcohol distillery processes as it may be utilized for treatment of molasses wastewater (PubMed:33387709). Has potential for application in biological recycling of plastic waste products (PubMed:23592055, PubMed:28671263, Ref.1).</text>
</comment>
<comment type="similarity">
    <text evidence="10">Belongs to the AB hydrolase superfamily.</text>
</comment>
<reference evidence="12" key="1">
    <citation type="journal article" date="2011" name="Macromolecules">
        <title>Enzymatic Surface Hydrolysis of PET: Effect of Structural Diversity on Kinetic Properties of Cutinases from Thermobifida.</title>
        <authorList>
            <person name="Herrero-Acero E."/>
            <person name="Ribitsch D."/>
            <person name="Steinkellner G."/>
            <person name="Gruber K."/>
            <person name="Greimel K."/>
            <person name="Eiteljoerg I."/>
            <person name="Trotscha E."/>
            <person name="Wei R."/>
            <person name="Zimmermann W."/>
            <person name="Zinn M."/>
            <person name="Cavaco-Paulo A."/>
            <person name="Freddi G."/>
            <person name="Schwab H."/>
            <person name="Guebitz G."/>
        </authorList>
    </citation>
    <scope>NUCLEOTIDE SEQUENCE [GENOMIC DNA]</scope>
    <scope>FUNCTION</scope>
    <scope>CATALYTIC ACTIVITY</scope>
    <scope>BIOPHYSICOCHEMICAL PROPERTIES</scope>
    <scope>BIOTECHNOLOGY</scope>
    <source>
        <strain evidence="9">DSM44535</strain>
    </source>
</reference>
<reference evidence="10" key="2">
    <citation type="journal article" date="2013" name="Biotechnol. Bioeng.">
        <title>Surface engineering of a cutinase from Thermobifida cellulosilytica for improved polyester hydrolysis.</title>
        <authorList>
            <person name="Herrero Acero E."/>
            <person name="Ribitsch D."/>
            <person name="Dellacher A."/>
            <person name="Zitzenbacher S."/>
            <person name="Marold A."/>
            <person name="Steinkellner G."/>
            <person name="Gruber K."/>
            <person name="Schwab H."/>
            <person name="Guebitz G.M."/>
        </authorList>
    </citation>
    <scope>FUNCTION</scope>
    <scope>CATALYTIC ACTIVITY</scope>
    <scope>BIOTECHNOLOGY</scope>
    <scope>MUTAGENESIS OF 29-ARG-ALA-30 AND GLN-65</scope>
</reference>
<reference evidence="10" key="3">
    <citation type="journal article" date="2021" name="Bioresour. Technol.">
        <title>Decolorization of molasses alcohol wastewater by thermophilic hydrolase with practical application value.</title>
        <authorList>
            <person name="Zhang Z."/>
            <person name="Wang W."/>
            <person name="Li D."/>
            <person name="Xiao J."/>
            <person name="Wu L."/>
            <person name="Geng X."/>
            <person name="Wu G."/>
            <person name="Zeng Z."/>
            <person name="Hu J."/>
        </authorList>
    </citation>
    <scope>BIOTECHNOLOGY</scope>
</reference>
<reference evidence="13 14" key="4">
    <citation type="journal article" date="2017" name="Biotechnol. Bioeng.">
        <title>Small cause, large effect: Structural characterization of cutinases from Thermobifida cellulosilytica.</title>
        <authorList>
            <person name="Ribitsch D."/>
            <person name="Hromic A."/>
            <person name="Zitzenbacher S."/>
            <person name="Zartl B."/>
            <person name="Gamerith C."/>
            <person name="Pellis A."/>
            <person name="Jungbauer A."/>
            <person name="Lyskowski A."/>
            <person name="Steinkellner G."/>
            <person name="Gruber K."/>
            <person name="Tscheliessnig R."/>
            <person name="Acero E.H."/>
            <person name="Guebitz G.M."/>
        </authorList>
    </citation>
    <scope>X-RAY CRYSTALLOGRAPHY (1.45 ANGSTROMS)</scope>
    <scope>FUNCTION</scope>
    <scope>CATALYTIC ACTIVITY</scope>
    <scope>BIOTECHNOLOGY</scope>
    <scope>DISULFIDE BONDS</scope>
    <scope>MUTAGENESIS OF 29-ARG-ALA-30</scope>
</reference>
<feature type="chain" id="PRO_0000455612" description="Cutinase 2" evidence="4">
    <location>
        <begin position="1" status="less than"/>
        <end position="262"/>
    </location>
</feature>
<feature type="active site" description="Nucleophile" evidence="3">
    <location>
        <position position="131"/>
    </location>
</feature>
<feature type="active site" description="Charge relay system" evidence="1">
    <location>
        <position position="177"/>
    </location>
</feature>
<feature type="active site" description="Charge relay system" evidence="1">
    <location>
        <position position="209"/>
    </location>
</feature>
<feature type="binding site" evidence="1">
    <location>
        <position position="61"/>
    </location>
    <ligand>
        <name>poly(ethylene terephthalate)</name>
        <dbReference type="ChEBI" id="CHEBI:131701"/>
    </ligand>
</feature>
<feature type="binding site" evidence="1">
    <location>
        <position position="132"/>
    </location>
    <ligand>
        <name>poly(ethylene terephthalate)</name>
        <dbReference type="ChEBI" id="CHEBI:131701"/>
    </ligand>
</feature>
<feature type="binding site" evidence="1">
    <location>
        <position position="156"/>
    </location>
    <ligand>
        <name>poly(ethylene terephthalate)</name>
        <dbReference type="ChEBI" id="CHEBI:131701"/>
    </ligand>
</feature>
<feature type="disulfide bond" evidence="6 13 14">
    <location>
        <begin position="242"/>
        <end position="260"/>
    </location>
</feature>
<feature type="mutagenesis site" description="Increases activity on pNP-acetate, pNP-butanoate, and poly(lactic acid)." evidence="5 6">
    <original>RA</original>
    <variation>NV</variation>
    <location>
        <begin position="29"/>
        <end position="30"/>
    </location>
</feature>
<feature type="mutagenesis site" description="Decreases activity on poly(ethylene terephthalate)." evidence="5">
    <original>Q</original>
    <variation>E</variation>
    <location>
        <position position="65"/>
    </location>
</feature>
<feature type="non-terminal residue" evidence="12">
    <location>
        <position position="1"/>
    </location>
</feature>
<feature type="helix" evidence="15">
    <location>
        <begin position="13"/>
        <end position="17"/>
    </location>
</feature>
<feature type="strand" evidence="15">
    <location>
        <begin position="18"/>
        <end position="20"/>
    </location>
</feature>
<feature type="strand" evidence="15">
    <location>
        <begin position="25"/>
        <end position="30"/>
    </location>
</feature>
<feature type="helix" evidence="15">
    <location>
        <begin position="32"/>
        <end position="34"/>
    </location>
</feature>
<feature type="strand" evidence="15">
    <location>
        <begin position="41"/>
        <end position="48"/>
    </location>
</feature>
<feature type="strand" evidence="15">
    <location>
        <begin position="52"/>
        <end position="58"/>
    </location>
</feature>
<feature type="helix" evidence="15">
    <location>
        <begin position="65"/>
        <end position="68"/>
    </location>
</feature>
<feature type="helix" evidence="15">
    <location>
        <begin position="69"/>
        <end position="76"/>
    </location>
</feature>
<feature type="turn" evidence="15">
    <location>
        <begin position="77"/>
        <end position="79"/>
    </location>
</feature>
<feature type="strand" evidence="15">
    <location>
        <begin position="81"/>
        <end position="85"/>
    </location>
</feature>
<feature type="helix" evidence="15">
    <location>
        <begin position="94"/>
        <end position="110"/>
    </location>
</feature>
<feature type="helix" evidence="15">
    <location>
        <begin position="114"/>
        <end position="117"/>
    </location>
</feature>
<feature type="strand" evidence="15">
    <location>
        <begin position="120"/>
        <end position="130"/>
    </location>
</feature>
<feature type="helix" evidence="15">
    <location>
        <begin position="132"/>
        <end position="143"/>
    </location>
</feature>
<feature type="strand" evidence="15">
    <location>
        <begin position="148"/>
        <end position="154"/>
    </location>
</feature>
<feature type="strand" evidence="15">
    <location>
        <begin position="169"/>
        <end position="174"/>
    </location>
</feature>
<feature type="strand" evidence="15">
    <location>
        <begin position="178"/>
        <end position="180"/>
    </location>
</feature>
<feature type="turn" evidence="15">
    <location>
        <begin position="182"/>
        <end position="185"/>
    </location>
</feature>
<feature type="helix" evidence="15">
    <location>
        <begin position="186"/>
        <end position="192"/>
    </location>
</feature>
<feature type="strand" evidence="15">
    <location>
        <begin position="199"/>
        <end position="204"/>
    </location>
</feature>
<feature type="helix" evidence="15">
    <location>
        <begin position="211"/>
        <end position="213"/>
    </location>
</feature>
<feature type="helix" evidence="15">
    <location>
        <begin position="217"/>
        <end position="231"/>
    </location>
</feature>
<feature type="helix" evidence="15">
    <location>
        <begin position="235"/>
        <end position="237"/>
    </location>
</feature>
<feature type="helix" evidence="15">
    <location>
        <begin position="238"/>
        <end position="241"/>
    </location>
</feature>
<feature type="turn" evidence="15">
    <location>
        <begin position="250"/>
        <end position="252"/>
    </location>
</feature>
<feature type="strand" evidence="15">
    <location>
        <begin position="253"/>
        <end position="258"/>
    </location>
</feature>
<proteinExistence type="evidence at protein level"/>
<evidence type="ECO:0000250" key="1">
    <source>
        <dbReference type="UniProtKB" id="A0A0K8P6T7"/>
    </source>
</evidence>
<evidence type="ECO:0000250" key="2">
    <source>
        <dbReference type="UniProtKB" id="G8GER6"/>
    </source>
</evidence>
<evidence type="ECO:0000250" key="3">
    <source>
        <dbReference type="UniProtKB" id="Q47RJ6"/>
    </source>
</evidence>
<evidence type="ECO:0000255" key="4"/>
<evidence type="ECO:0000269" key="5">
    <source>
    </source>
</evidence>
<evidence type="ECO:0000269" key="6">
    <source>
    </source>
</evidence>
<evidence type="ECO:0000269" key="7">
    <source>
    </source>
</evidence>
<evidence type="ECO:0000269" key="8">
    <source ref="1"/>
</evidence>
<evidence type="ECO:0000303" key="9">
    <source ref="1"/>
</evidence>
<evidence type="ECO:0000305" key="10"/>
<evidence type="ECO:0000305" key="11">
    <source>
    </source>
</evidence>
<evidence type="ECO:0000312" key="12">
    <source>
        <dbReference type="EMBL" id="ADV92527.1"/>
    </source>
</evidence>
<evidence type="ECO:0007744" key="13">
    <source>
        <dbReference type="PDB" id="5LUJ"/>
    </source>
</evidence>
<evidence type="ECO:0007744" key="14">
    <source>
        <dbReference type="PDB" id="5LUK"/>
    </source>
</evidence>
<evidence type="ECO:0007829" key="15">
    <source>
        <dbReference type="PDB" id="5LUK"/>
    </source>
</evidence>
<protein>
    <recommendedName>
        <fullName evidence="9">Cutinase 2</fullName>
        <ecNumber evidence="11">3.1.1.74</ecNumber>
    </recommendedName>
    <alternativeName>
        <fullName evidence="10">Poly(ethylene terephthalate) hydrolase</fullName>
        <shortName evidence="10">PET hydrolase</shortName>
        <shortName evidence="10">PETase</shortName>
        <ecNumber evidence="5 8 11">3.1.1.101</ecNumber>
    </alternativeName>
</protein>
<sequence>MANPYERGPNPTDALLEARSGPFSVSEERASRFGADGFGGGTIYYPRENNTYGAVAISPGYTGTQASVAWLGERIASHGFVVITIDTNTTLDQPDSRARQLNAALDYMINDASSAVRSRIDSSRLAVMGHSMGGGGTLRLASQRPDLKAAIPLTPWHLNKNWSSVRVPTLIIGADLDTIAPVLTHARPFYNSLPTSISKAYLELDGATHFAPNIPNKIIGKYSVAWLKRFVDNDTRYTQFLCPGPRDGLFGEVEEYRSTCPF</sequence>
<name>PETH2_THECS</name>
<dbReference type="EC" id="3.1.1.74" evidence="11"/>
<dbReference type="EC" id="3.1.1.101" evidence="5 8 11"/>
<dbReference type="EMBL" id="HQ147786">
    <property type="protein sequence ID" value="ADV92527.1"/>
    <property type="molecule type" value="Genomic_DNA"/>
</dbReference>
<dbReference type="PDB" id="5LUJ">
    <property type="method" value="X-ray"/>
    <property type="resolution" value="2.20 A"/>
    <property type="chains" value="A=1-262"/>
</dbReference>
<dbReference type="PDB" id="5LUK">
    <property type="method" value="X-ray"/>
    <property type="resolution" value="1.45 A"/>
    <property type="chains" value="A=1-262"/>
</dbReference>
<dbReference type="PDB" id="5LUL">
    <property type="method" value="X-ray"/>
    <property type="resolution" value="1.90 A"/>
    <property type="chains" value="A/B=1-262"/>
</dbReference>
<dbReference type="PDB" id="7QJS">
    <property type="method" value="X-ray"/>
    <property type="resolution" value="1.43 A"/>
    <property type="chains" value="A/B=1-262"/>
</dbReference>
<dbReference type="PDBsum" id="5LUJ"/>
<dbReference type="PDBsum" id="5LUK"/>
<dbReference type="PDBsum" id="5LUL"/>
<dbReference type="PDBsum" id="7QJS"/>
<dbReference type="SMR" id="E9LVH9"/>
<dbReference type="ESTHER" id="thefu-q6a0i3">
    <property type="family name" value="Polyesterase-lipase-cutinase"/>
</dbReference>
<dbReference type="BRENDA" id="3.1.1.101">
    <property type="organism ID" value="12709"/>
</dbReference>
<dbReference type="BRENDA" id="3.1.1.74">
    <property type="organism ID" value="12709"/>
</dbReference>
<dbReference type="SABIO-RK" id="E9LVH9"/>
<dbReference type="GO" id="GO:0005576">
    <property type="term" value="C:extracellular region"/>
    <property type="evidence" value="ECO:0007669"/>
    <property type="project" value="UniProtKB-SubCell"/>
</dbReference>
<dbReference type="GO" id="GO:0042597">
    <property type="term" value="C:periplasmic space"/>
    <property type="evidence" value="ECO:0007669"/>
    <property type="project" value="UniProtKB-SubCell"/>
</dbReference>
<dbReference type="GO" id="GO:0050525">
    <property type="term" value="F:cutinase activity"/>
    <property type="evidence" value="ECO:0007669"/>
    <property type="project" value="UniProtKB-ARBA"/>
</dbReference>
<dbReference type="Gene3D" id="3.40.50.1820">
    <property type="entry name" value="alpha/beta hydrolase"/>
    <property type="match status" value="1"/>
</dbReference>
<dbReference type="InterPro" id="IPR029058">
    <property type="entry name" value="AB_hydrolase_fold"/>
</dbReference>
<dbReference type="InterPro" id="IPR050261">
    <property type="entry name" value="FrsA_esterase"/>
</dbReference>
<dbReference type="InterPro" id="IPR041127">
    <property type="entry name" value="PET_hydrolase/cutinase-like"/>
</dbReference>
<dbReference type="PANTHER" id="PTHR22946">
    <property type="entry name" value="DIENELACTONE HYDROLASE DOMAIN-CONTAINING PROTEIN-RELATED"/>
    <property type="match status" value="1"/>
</dbReference>
<dbReference type="PANTHER" id="PTHR22946:SF9">
    <property type="entry name" value="POLYKETIDE TRANSFERASE AF380"/>
    <property type="match status" value="1"/>
</dbReference>
<dbReference type="Pfam" id="PF12740">
    <property type="entry name" value="PETase"/>
    <property type="match status" value="1"/>
</dbReference>
<dbReference type="SUPFAM" id="SSF53474">
    <property type="entry name" value="alpha/beta-Hydrolases"/>
    <property type="match status" value="1"/>
</dbReference>
<gene>
    <name evidence="9" type="primary">cut2</name>
</gene>
<accession>E9LVH9</accession>
<keyword id="KW-0002">3D-structure</keyword>
<keyword id="KW-1015">Disulfide bond</keyword>
<keyword id="KW-0378">Hydrolase</keyword>
<keyword id="KW-0574">Periplasm</keyword>
<keyword id="KW-0964">Secreted</keyword>
<keyword id="KW-0719">Serine esterase</keyword>
<organism>
    <name type="scientific">Thermobifida cellulosilytica</name>
    <dbReference type="NCBI Taxonomy" id="144786"/>
    <lineage>
        <taxon>Bacteria</taxon>
        <taxon>Bacillati</taxon>
        <taxon>Actinomycetota</taxon>
        <taxon>Actinomycetes</taxon>
        <taxon>Streptosporangiales</taxon>
        <taxon>Nocardiopsidaceae</taxon>
        <taxon>Thermobifida</taxon>
    </lineage>
</organism>